<comment type="subcellular location">
    <subcellularLocation>
        <location evidence="1">Cytoplasm</location>
    </subcellularLocation>
</comment>
<comment type="similarity">
    <text evidence="1">Belongs to the TACO1 family.</text>
</comment>
<comment type="sequence caution" evidence="3">
    <conflict type="erroneous initiation">
        <sequence resource="EMBL-CDS" id="BAC18586"/>
    </conflict>
</comment>
<protein>
    <recommendedName>
        <fullName evidence="1">Probable transcriptional regulatory protein CE1776</fullName>
    </recommendedName>
</protein>
<accession>Q8FPK2</accession>
<feature type="chain" id="PRO_0000175793" description="Probable transcriptional regulatory protein CE1776">
    <location>
        <begin position="1"/>
        <end position="252"/>
    </location>
</feature>
<feature type="region of interest" description="Disordered" evidence="2">
    <location>
        <begin position="1"/>
        <end position="22"/>
    </location>
</feature>
<keyword id="KW-0963">Cytoplasm</keyword>
<keyword id="KW-0238">DNA-binding</keyword>
<keyword id="KW-1185">Reference proteome</keyword>
<keyword id="KW-0804">Transcription</keyword>
<keyword id="KW-0805">Transcription regulation</keyword>
<proteinExistence type="inferred from homology"/>
<dbReference type="EMBL" id="BA000035">
    <property type="protein sequence ID" value="BAC18586.1"/>
    <property type="status" value="ALT_INIT"/>
    <property type="molecule type" value="Genomic_DNA"/>
</dbReference>
<dbReference type="RefSeq" id="WP_011075604.1">
    <property type="nucleotide sequence ID" value="NC_004369.1"/>
</dbReference>
<dbReference type="SMR" id="Q8FPK2"/>
<dbReference type="STRING" id="196164.gene:10742197"/>
<dbReference type="KEGG" id="cef:CE1776"/>
<dbReference type="eggNOG" id="COG0217">
    <property type="taxonomic scope" value="Bacteria"/>
</dbReference>
<dbReference type="HOGENOM" id="CLU_062974_2_2_11"/>
<dbReference type="OrthoDB" id="9781053at2"/>
<dbReference type="Proteomes" id="UP000001409">
    <property type="component" value="Chromosome"/>
</dbReference>
<dbReference type="GO" id="GO:0005829">
    <property type="term" value="C:cytosol"/>
    <property type="evidence" value="ECO:0007669"/>
    <property type="project" value="TreeGrafter"/>
</dbReference>
<dbReference type="GO" id="GO:0003677">
    <property type="term" value="F:DNA binding"/>
    <property type="evidence" value="ECO:0007669"/>
    <property type="project" value="UniProtKB-UniRule"/>
</dbReference>
<dbReference type="GO" id="GO:0006355">
    <property type="term" value="P:regulation of DNA-templated transcription"/>
    <property type="evidence" value="ECO:0007669"/>
    <property type="project" value="UniProtKB-UniRule"/>
</dbReference>
<dbReference type="FunFam" id="1.10.10.200:FF:000002">
    <property type="entry name" value="Probable transcriptional regulatory protein CLM62_37755"/>
    <property type="match status" value="1"/>
</dbReference>
<dbReference type="Gene3D" id="1.10.10.200">
    <property type="match status" value="1"/>
</dbReference>
<dbReference type="Gene3D" id="3.30.70.980">
    <property type="match status" value="2"/>
</dbReference>
<dbReference type="HAMAP" id="MF_00693">
    <property type="entry name" value="Transcrip_reg_TACO1"/>
    <property type="match status" value="1"/>
</dbReference>
<dbReference type="InterPro" id="IPR017856">
    <property type="entry name" value="Integrase-like_N"/>
</dbReference>
<dbReference type="InterPro" id="IPR048300">
    <property type="entry name" value="TACO1_YebC-like_2nd/3rd_dom"/>
</dbReference>
<dbReference type="InterPro" id="IPR049083">
    <property type="entry name" value="TACO1_YebC_N"/>
</dbReference>
<dbReference type="InterPro" id="IPR002876">
    <property type="entry name" value="Transcrip_reg_TACO1-like"/>
</dbReference>
<dbReference type="InterPro" id="IPR026564">
    <property type="entry name" value="Transcrip_reg_TACO1-like_dom3"/>
</dbReference>
<dbReference type="InterPro" id="IPR029072">
    <property type="entry name" value="YebC-like"/>
</dbReference>
<dbReference type="NCBIfam" id="NF001030">
    <property type="entry name" value="PRK00110.1"/>
    <property type="match status" value="1"/>
</dbReference>
<dbReference type="NCBIfam" id="NF009044">
    <property type="entry name" value="PRK12378.1"/>
    <property type="match status" value="1"/>
</dbReference>
<dbReference type="NCBIfam" id="TIGR01033">
    <property type="entry name" value="YebC/PmpR family DNA-binding transcriptional regulator"/>
    <property type="match status" value="1"/>
</dbReference>
<dbReference type="PANTHER" id="PTHR12532:SF6">
    <property type="entry name" value="TRANSCRIPTIONAL REGULATORY PROTEIN YEBC-RELATED"/>
    <property type="match status" value="1"/>
</dbReference>
<dbReference type="PANTHER" id="PTHR12532">
    <property type="entry name" value="TRANSLATIONAL ACTIVATOR OF CYTOCHROME C OXIDASE 1"/>
    <property type="match status" value="1"/>
</dbReference>
<dbReference type="Pfam" id="PF20772">
    <property type="entry name" value="TACO1_YebC_N"/>
    <property type="match status" value="1"/>
</dbReference>
<dbReference type="Pfam" id="PF01709">
    <property type="entry name" value="Transcrip_reg"/>
    <property type="match status" value="1"/>
</dbReference>
<dbReference type="SUPFAM" id="SSF75625">
    <property type="entry name" value="YebC-like"/>
    <property type="match status" value="1"/>
</dbReference>
<reference key="1">
    <citation type="journal article" date="2003" name="Genome Res.">
        <title>Comparative complete genome sequence analysis of the amino acid replacements responsible for the thermostability of Corynebacterium efficiens.</title>
        <authorList>
            <person name="Nishio Y."/>
            <person name="Nakamura Y."/>
            <person name="Kawarabayasi Y."/>
            <person name="Usuda Y."/>
            <person name="Kimura E."/>
            <person name="Sugimoto S."/>
            <person name="Matsui K."/>
            <person name="Yamagishi A."/>
            <person name="Kikuchi H."/>
            <person name="Ikeo K."/>
            <person name="Gojobori T."/>
        </authorList>
    </citation>
    <scope>NUCLEOTIDE SEQUENCE [LARGE SCALE GENOMIC DNA]</scope>
    <source>
        <strain>DSM 44549 / YS-314 / AJ 12310 / JCM 11189 / NBRC 100395</strain>
    </source>
</reference>
<organism>
    <name type="scientific">Corynebacterium efficiens (strain DSM 44549 / YS-314 / AJ 12310 / JCM 11189 / NBRC 100395)</name>
    <dbReference type="NCBI Taxonomy" id="196164"/>
    <lineage>
        <taxon>Bacteria</taxon>
        <taxon>Bacillati</taxon>
        <taxon>Actinomycetota</taxon>
        <taxon>Actinomycetes</taxon>
        <taxon>Mycobacteriales</taxon>
        <taxon>Corynebacteriaceae</taxon>
        <taxon>Corynebacterium</taxon>
    </lineage>
</organism>
<sequence>MAGHSKWATTKHKKAANDAKRGKEFAKLVKNIEVAARMGGGDPSANPTLDDMIKKAKKASVPNDNIERARKRGSGEEAGGADWVPIMYEGYGPNGVAVLIECLTDNRNRAATEVRTAMSKNGGNLGETGSVSYMFTRTGIVQVKKGELTEDDVLIAVLEAGAEEVNDLGEVFEITCEPTDLEAVKAALVDAGIEIEDADSDFRASVEVPLDAEGARKIFRLVDALEDSDDVQNVYTNITLSDEVLAELENDE</sequence>
<evidence type="ECO:0000255" key="1">
    <source>
        <dbReference type="HAMAP-Rule" id="MF_00693"/>
    </source>
</evidence>
<evidence type="ECO:0000256" key="2">
    <source>
        <dbReference type="SAM" id="MobiDB-lite"/>
    </source>
</evidence>
<evidence type="ECO:0000305" key="3"/>
<gene>
    <name type="ordered locus">CE1776</name>
</gene>
<name>Y1776_COREF</name>